<name>YD2D_SCHPO</name>
<keyword id="KW-1185">Reference proteome</keyword>
<organism>
    <name type="scientific">Schizosaccharomyces pombe (strain 972 / ATCC 24843)</name>
    <name type="common">Fission yeast</name>
    <dbReference type="NCBI Taxonomy" id="284812"/>
    <lineage>
        <taxon>Eukaryota</taxon>
        <taxon>Fungi</taxon>
        <taxon>Dikarya</taxon>
        <taxon>Ascomycota</taxon>
        <taxon>Taphrinomycotina</taxon>
        <taxon>Schizosaccharomycetes</taxon>
        <taxon>Schizosaccharomycetales</taxon>
        <taxon>Schizosaccharomycetaceae</taxon>
        <taxon>Schizosaccharomyces</taxon>
    </lineage>
</organism>
<reference key="1">
    <citation type="journal article" date="2002" name="Nature">
        <title>The genome sequence of Schizosaccharomyces pombe.</title>
        <authorList>
            <person name="Wood V."/>
            <person name="Gwilliam R."/>
            <person name="Rajandream M.A."/>
            <person name="Lyne M.H."/>
            <person name="Lyne R."/>
            <person name="Stewart A."/>
            <person name="Sgouros J.G."/>
            <person name="Peat N."/>
            <person name="Hayles J."/>
            <person name="Baker S.G."/>
            <person name="Basham D."/>
            <person name="Bowman S."/>
            <person name="Brooks K."/>
            <person name="Brown D."/>
            <person name="Brown S."/>
            <person name="Chillingworth T."/>
            <person name="Churcher C.M."/>
            <person name="Collins M."/>
            <person name="Connor R."/>
            <person name="Cronin A."/>
            <person name="Davis P."/>
            <person name="Feltwell T."/>
            <person name="Fraser A."/>
            <person name="Gentles S."/>
            <person name="Goble A."/>
            <person name="Hamlin N."/>
            <person name="Harris D.E."/>
            <person name="Hidalgo J."/>
            <person name="Hodgson G."/>
            <person name="Holroyd S."/>
            <person name="Hornsby T."/>
            <person name="Howarth S."/>
            <person name="Huckle E.J."/>
            <person name="Hunt S."/>
            <person name="Jagels K."/>
            <person name="James K.D."/>
            <person name="Jones L."/>
            <person name="Jones M."/>
            <person name="Leather S."/>
            <person name="McDonald S."/>
            <person name="McLean J."/>
            <person name="Mooney P."/>
            <person name="Moule S."/>
            <person name="Mungall K.L."/>
            <person name="Murphy L.D."/>
            <person name="Niblett D."/>
            <person name="Odell C."/>
            <person name="Oliver K."/>
            <person name="O'Neil S."/>
            <person name="Pearson D."/>
            <person name="Quail M.A."/>
            <person name="Rabbinowitsch E."/>
            <person name="Rutherford K.M."/>
            <person name="Rutter S."/>
            <person name="Saunders D."/>
            <person name="Seeger K."/>
            <person name="Sharp S."/>
            <person name="Skelton J."/>
            <person name="Simmonds M.N."/>
            <person name="Squares R."/>
            <person name="Squares S."/>
            <person name="Stevens K."/>
            <person name="Taylor K."/>
            <person name="Taylor R.G."/>
            <person name="Tivey A."/>
            <person name="Walsh S.V."/>
            <person name="Warren T."/>
            <person name="Whitehead S."/>
            <person name="Woodward J.R."/>
            <person name="Volckaert G."/>
            <person name="Aert R."/>
            <person name="Robben J."/>
            <person name="Grymonprez B."/>
            <person name="Weltjens I."/>
            <person name="Vanstreels E."/>
            <person name="Rieger M."/>
            <person name="Schaefer M."/>
            <person name="Mueller-Auer S."/>
            <person name="Gabel C."/>
            <person name="Fuchs M."/>
            <person name="Duesterhoeft A."/>
            <person name="Fritzc C."/>
            <person name="Holzer E."/>
            <person name="Moestl D."/>
            <person name="Hilbert H."/>
            <person name="Borzym K."/>
            <person name="Langer I."/>
            <person name="Beck A."/>
            <person name="Lehrach H."/>
            <person name="Reinhardt R."/>
            <person name="Pohl T.M."/>
            <person name="Eger P."/>
            <person name="Zimmermann W."/>
            <person name="Wedler H."/>
            <person name="Wambutt R."/>
            <person name="Purnelle B."/>
            <person name="Goffeau A."/>
            <person name="Cadieu E."/>
            <person name="Dreano S."/>
            <person name="Gloux S."/>
            <person name="Lelaure V."/>
            <person name="Mottier S."/>
            <person name="Galibert F."/>
            <person name="Aves S.J."/>
            <person name="Xiang Z."/>
            <person name="Hunt C."/>
            <person name="Moore K."/>
            <person name="Hurst S.M."/>
            <person name="Lucas M."/>
            <person name="Rochet M."/>
            <person name="Gaillardin C."/>
            <person name="Tallada V.A."/>
            <person name="Garzon A."/>
            <person name="Thode G."/>
            <person name="Daga R.R."/>
            <person name="Cruzado L."/>
            <person name="Jimenez J."/>
            <person name="Sanchez M."/>
            <person name="del Rey F."/>
            <person name="Benito J."/>
            <person name="Dominguez A."/>
            <person name="Revuelta J.L."/>
            <person name="Moreno S."/>
            <person name="Armstrong J."/>
            <person name="Forsburg S.L."/>
            <person name="Cerutti L."/>
            <person name="Lowe T."/>
            <person name="McCombie W.R."/>
            <person name="Paulsen I."/>
            <person name="Potashkin J."/>
            <person name="Shpakovski G.V."/>
            <person name="Ussery D."/>
            <person name="Barrell B.G."/>
            <person name="Nurse P."/>
        </authorList>
    </citation>
    <scope>NUCLEOTIDE SEQUENCE [LARGE SCALE GENOMIC DNA]</scope>
    <source>
        <strain>972 / ATCC 24843</strain>
    </source>
</reference>
<proteinExistence type="predicted"/>
<protein>
    <recommendedName>
        <fullName>Uncharacterized protein C56F8.13</fullName>
    </recommendedName>
</protein>
<dbReference type="EMBL" id="CU329670">
    <property type="protein sequence ID" value="CAA93584.1"/>
    <property type="molecule type" value="Genomic_DNA"/>
</dbReference>
<dbReference type="PIR" id="T38923">
    <property type="entry name" value="T38923"/>
</dbReference>
<dbReference type="RefSeq" id="NP_593227.1">
    <property type="nucleotide sequence ID" value="NM_001018624.2"/>
</dbReference>
<dbReference type="SMR" id="Q10261"/>
<dbReference type="STRING" id="284812.Q10261"/>
<dbReference type="PaxDb" id="4896-SPAC56F8.13.1"/>
<dbReference type="EnsemblFungi" id="SPAC56F8.13.1">
    <property type="protein sequence ID" value="SPAC56F8.13.1:pep"/>
    <property type="gene ID" value="SPAC56F8.13"/>
</dbReference>
<dbReference type="KEGG" id="spo:2543322"/>
<dbReference type="PomBase" id="SPAC56F8.13"/>
<dbReference type="VEuPathDB" id="FungiDB:SPAC56F8.13"/>
<dbReference type="HOGENOM" id="CLU_2293309_0_0_1"/>
<dbReference type="InParanoid" id="Q10261"/>
<dbReference type="PRO" id="PR:Q10261"/>
<dbReference type="Proteomes" id="UP000002485">
    <property type="component" value="Chromosome I"/>
</dbReference>
<gene>
    <name type="ORF">SPAC56F8.13</name>
</gene>
<feature type="chain" id="PRO_0000116571" description="Uncharacterized protein C56F8.13">
    <location>
        <begin position="1"/>
        <end position="101"/>
    </location>
</feature>
<accession>Q10261</accession>
<sequence length="101" mass="11226">MNATQKKKNEKKTKNPYSHNHVNTKLILPHNTFLTNILFLLGLIKHTNQLTFPSIPHSSAISTLLKQTPLPTRILFLSLCLTPSSASARSSDGIILFPHPS</sequence>